<name>NOVF_STRNV</name>
<reference key="1">
    <citation type="journal article" date="2000" name="Antimicrob. Agents Chemother.">
        <title>Identification of the novobiocin biosynthetic gene cluster of Streptomyces spheroides NCIB 11891.</title>
        <authorList>
            <person name="Steffensky M."/>
            <person name="Muhlenweg A."/>
            <person name="Wang Z.X."/>
            <person name="Li S.M."/>
            <person name="Heide L."/>
        </authorList>
    </citation>
    <scope>NUCLEOTIDE SEQUENCE [GENOMIC DNA]</scope>
    <source>
        <strain>ATCC 23965 / DSM 40292 / JCM 4252 / NBRC 12917 / NCIMB 11891 / NRRL 2449</strain>
    </source>
</reference>
<reference key="2">
    <citation type="journal article" date="2006" name="Planta Med.">
        <title>The biosynthetic gene clusters of aminocoumarin antibiotics.</title>
        <authorList>
            <person name="Li S.M."/>
            <person name="Heide L."/>
        </authorList>
    </citation>
    <scope>REVIEW</scope>
    <scope>POSSIBLE FUNCTION</scope>
</reference>
<keyword id="KW-0045">Antibiotic biosynthesis</keyword>
<keyword id="KW-0520">NAD</keyword>
<keyword id="KW-0560">Oxidoreductase</keyword>
<proteinExistence type="inferred from homology"/>
<comment type="function">
    <text>Probable prephenate dehydrogenase that produces 4-hydroxyphenylpyruvate (4HPP) in the novobiocin biosynthesis pathway. Novobiocin is an aminocoumarin family antibiotic that targets bacterial DNA gyrases.</text>
</comment>
<comment type="catalytic activity">
    <reaction>
        <text>prephenate + NAD(+) = 3-(4-hydroxyphenyl)pyruvate + CO2 + NADH</text>
        <dbReference type="Rhea" id="RHEA:13869"/>
        <dbReference type="ChEBI" id="CHEBI:16526"/>
        <dbReference type="ChEBI" id="CHEBI:29934"/>
        <dbReference type="ChEBI" id="CHEBI:36242"/>
        <dbReference type="ChEBI" id="CHEBI:57540"/>
        <dbReference type="ChEBI" id="CHEBI:57945"/>
        <dbReference type="EC" id="1.3.1.12"/>
    </reaction>
</comment>
<comment type="pathway">
    <text>Antibiotic biosynthesis; novobiocin biosynthesis.</text>
</comment>
<comment type="similarity">
    <text evidence="2">Belongs to the prephenate/arogenate dehydrogenase family.</text>
</comment>
<evidence type="ECO:0000255" key="1">
    <source>
        <dbReference type="PROSITE-ProRule" id="PRU00522"/>
    </source>
</evidence>
<evidence type="ECO:0000305" key="2"/>
<organism>
    <name type="scientific">Streptomyces niveus</name>
    <name type="common">Streptomyces spheroides</name>
    <dbReference type="NCBI Taxonomy" id="193462"/>
    <lineage>
        <taxon>Bacteria</taxon>
        <taxon>Bacillati</taxon>
        <taxon>Actinomycetota</taxon>
        <taxon>Actinomycetes</taxon>
        <taxon>Kitasatosporales</taxon>
        <taxon>Streptomycetaceae</taxon>
        <taxon>Streptomyces</taxon>
    </lineage>
</organism>
<protein>
    <recommendedName>
        <fullName>Probable prephenate dehydrogenase NovF</fullName>
        <ecNumber>1.3.1.12</ecNumber>
    </recommendedName>
    <alternativeName>
        <fullName>Novobiocin biosynthesis protein F</fullName>
    </alternativeName>
</protein>
<feature type="chain" id="PRO_0000423990" description="Probable prephenate dehydrogenase NovF">
    <location>
        <begin position="1"/>
        <end position="362"/>
    </location>
</feature>
<feature type="domain" description="Prephenate/arogenate dehydrogenase" evidence="1">
    <location>
        <begin position="2"/>
        <end position="283"/>
    </location>
</feature>
<accession>Q9L9G2</accession>
<sequence>MRTAVIIGTGMIGTSIGLALRKQGVDSYLMDTSPVALRIAEAVGAGTAEEPPETVDLAVVAVPPVHVAPVIASHQSRGTARFYVDVAGVKVSTRRELDALGCDLATVVGGHPLVGRPGSGPLAARGDLFDGRPWALVPAVGTDAAALNRALELVAACGAIPVVLDAEAHDRAIALGTLVPQIALTLVAARLTEADSGALRLLGSVWSEIPQLVGVDSATSWTQVLAANAAPVVGELEKLSRDLASLLETLRGVADGDGSLAEPDGRLLEFIQRGIDGSNRVPGRYGIPTETALADVDVSVDDRPAELARLFDDVAGAGVVMRGIDISQRPDSPDRTVTISVTPRDAENLLHELRRRKWPANS</sequence>
<gene>
    <name type="primary">novF</name>
</gene>
<dbReference type="EC" id="1.3.1.12"/>
<dbReference type="EMBL" id="AF170880">
    <property type="protein sequence ID" value="AAF67499.1"/>
    <property type="molecule type" value="Genomic_DNA"/>
</dbReference>
<dbReference type="RefSeq" id="WP_069626137.1">
    <property type="nucleotide sequence ID" value="NZ_JBFBIX010000004.1"/>
</dbReference>
<dbReference type="SMR" id="Q9L9G2"/>
<dbReference type="BioCyc" id="MetaCyc:MONOMER-18092"/>
<dbReference type="UniPathway" id="UPA01035"/>
<dbReference type="GO" id="GO:0070403">
    <property type="term" value="F:NAD+ binding"/>
    <property type="evidence" value="ECO:0007669"/>
    <property type="project" value="InterPro"/>
</dbReference>
<dbReference type="GO" id="GO:0008977">
    <property type="term" value="F:prephenate dehydrogenase (NAD+) activity"/>
    <property type="evidence" value="ECO:0007669"/>
    <property type="project" value="UniProtKB-EC"/>
</dbReference>
<dbReference type="GO" id="GO:0004665">
    <property type="term" value="F:prephenate dehydrogenase (NADP+) activity"/>
    <property type="evidence" value="ECO:0007669"/>
    <property type="project" value="InterPro"/>
</dbReference>
<dbReference type="GO" id="GO:0017000">
    <property type="term" value="P:antibiotic biosynthetic process"/>
    <property type="evidence" value="ECO:0007669"/>
    <property type="project" value="UniProtKB-KW"/>
</dbReference>
<dbReference type="GO" id="GO:0006571">
    <property type="term" value="P:tyrosine biosynthetic process"/>
    <property type="evidence" value="ECO:0007669"/>
    <property type="project" value="InterPro"/>
</dbReference>
<dbReference type="Gene3D" id="1.10.3660.10">
    <property type="entry name" value="6-phosphogluconate dehydrogenase C-terminal like domain"/>
    <property type="match status" value="1"/>
</dbReference>
<dbReference type="Gene3D" id="3.40.50.720">
    <property type="entry name" value="NAD(P)-binding Rossmann-like Domain"/>
    <property type="match status" value="1"/>
</dbReference>
<dbReference type="InterPro" id="IPR036291">
    <property type="entry name" value="NAD(P)-bd_dom_sf"/>
</dbReference>
<dbReference type="InterPro" id="IPR046826">
    <property type="entry name" value="PDH_N"/>
</dbReference>
<dbReference type="InterPro" id="IPR050812">
    <property type="entry name" value="Preph/Arog_dehydrog"/>
</dbReference>
<dbReference type="InterPro" id="IPR003099">
    <property type="entry name" value="Prephen_DH"/>
</dbReference>
<dbReference type="NCBIfam" id="NF005112">
    <property type="entry name" value="PRK06545.2-4"/>
    <property type="match status" value="1"/>
</dbReference>
<dbReference type="PANTHER" id="PTHR21363">
    <property type="entry name" value="PREPHENATE DEHYDROGENASE"/>
    <property type="match status" value="1"/>
</dbReference>
<dbReference type="PANTHER" id="PTHR21363:SF0">
    <property type="entry name" value="PREPHENATE DEHYDROGENASE [NADP(+)]"/>
    <property type="match status" value="1"/>
</dbReference>
<dbReference type="Pfam" id="PF02153">
    <property type="entry name" value="PDH_N"/>
    <property type="match status" value="1"/>
</dbReference>
<dbReference type="SUPFAM" id="SSF51735">
    <property type="entry name" value="NAD(P)-binding Rossmann-fold domains"/>
    <property type="match status" value="1"/>
</dbReference>
<dbReference type="PROSITE" id="PS51176">
    <property type="entry name" value="PDH_ADH"/>
    <property type="match status" value="1"/>
</dbReference>